<protein>
    <recommendedName>
        <fullName evidence="3">Beta-glucuronidase</fullName>
        <ecNumber evidence="2">3.2.1.31</ecNumber>
    </recommendedName>
</protein>
<dbReference type="EC" id="3.2.1.31" evidence="2"/>
<dbReference type="EMBL" id="CP009285">
    <property type="protein sequence ID" value="AIQ57810.1"/>
    <property type="molecule type" value="Genomic_DNA"/>
</dbReference>
<dbReference type="RefSeq" id="WP_042212131.1">
    <property type="nucleotide sequence ID" value="NZ_CP009285.1"/>
</dbReference>
<dbReference type="KEGG" id="pbd:PBOR_13360"/>
<dbReference type="HOGENOM" id="CLU_006501_6_1_9"/>
<dbReference type="OrthoDB" id="9762066at2"/>
<dbReference type="Proteomes" id="UP000029518">
    <property type="component" value="Chromosome"/>
</dbReference>
<dbReference type="GO" id="GO:0005737">
    <property type="term" value="C:cytoplasm"/>
    <property type="evidence" value="ECO:0007669"/>
    <property type="project" value="UniProtKB-SubCell"/>
</dbReference>
<dbReference type="GO" id="GO:0005615">
    <property type="term" value="C:extracellular space"/>
    <property type="evidence" value="ECO:0007669"/>
    <property type="project" value="TreeGrafter"/>
</dbReference>
<dbReference type="GO" id="GO:0004565">
    <property type="term" value="F:beta-galactosidase activity"/>
    <property type="evidence" value="ECO:0007669"/>
    <property type="project" value="UniProtKB-EC"/>
</dbReference>
<dbReference type="GO" id="GO:0004566">
    <property type="term" value="F:beta-glucuronidase activity"/>
    <property type="evidence" value="ECO:0007669"/>
    <property type="project" value="TreeGrafter"/>
</dbReference>
<dbReference type="GO" id="GO:0030246">
    <property type="term" value="F:carbohydrate binding"/>
    <property type="evidence" value="ECO:0007669"/>
    <property type="project" value="TreeGrafter"/>
</dbReference>
<dbReference type="GO" id="GO:0005975">
    <property type="term" value="P:carbohydrate metabolic process"/>
    <property type="evidence" value="ECO:0007669"/>
    <property type="project" value="InterPro"/>
</dbReference>
<dbReference type="GO" id="GO:0019391">
    <property type="term" value="P:glucuronoside catabolic process"/>
    <property type="evidence" value="ECO:0007669"/>
    <property type="project" value="TreeGrafter"/>
</dbReference>
<dbReference type="FunFam" id="2.60.120.260:FF:000027">
    <property type="entry name" value="Beta-glucuronidase"/>
    <property type="match status" value="1"/>
</dbReference>
<dbReference type="FunFam" id="2.60.40.10:FF:001198">
    <property type="entry name" value="Beta-glucuronidase UidA"/>
    <property type="match status" value="1"/>
</dbReference>
<dbReference type="FunFam" id="3.20.20.80:FF:000080">
    <property type="entry name" value="Beta-glucuronidase UidA"/>
    <property type="match status" value="1"/>
</dbReference>
<dbReference type="Gene3D" id="2.60.120.260">
    <property type="entry name" value="Galactose-binding domain-like"/>
    <property type="match status" value="1"/>
</dbReference>
<dbReference type="Gene3D" id="3.20.20.80">
    <property type="entry name" value="Glycosidases"/>
    <property type="match status" value="1"/>
</dbReference>
<dbReference type="Gene3D" id="2.60.40.10">
    <property type="entry name" value="Immunoglobulins"/>
    <property type="match status" value="1"/>
</dbReference>
<dbReference type="InterPro" id="IPR036156">
    <property type="entry name" value="Beta-gal/glucu_dom_sf"/>
</dbReference>
<dbReference type="InterPro" id="IPR008979">
    <property type="entry name" value="Galactose-bd-like_sf"/>
</dbReference>
<dbReference type="InterPro" id="IPR006101">
    <property type="entry name" value="Glyco_hydro_2"/>
</dbReference>
<dbReference type="InterPro" id="IPR023232">
    <property type="entry name" value="Glyco_hydro_2_AS"/>
</dbReference>
<dbReference type="InterPro" id="IPR006103">
    <property type="entry name" value="Glyco_hydro_2_cat"/>
</dbReference>
<dbReference type="InterPro" id="IPR023230">
    <property type="entry name" value="Glyco_hydro_2_CS"/>
</dbReference>
<dbReference type="InterPro" id="IPR006102">
    <property type="entry name" value="Glyco_hydro_2_Ig-like"/>
</dbReference>
<dbReference type="InterPro" id="IPR006104">
    <property type="entry name" value="Glyco_hydro_2_N"/>
</dbReference>
<dbReference type="InterPro" id="IPR017853">
    <property type="entry name" value="Glycoside_hydrolase_SF"/>
</dbReference>
<dbReference type="InterPro" id="IPR013783">
    <property type="entry name" value="Ig-like_fold"/>
</dbReference>
<dbReference type="NCBIfam" id="NF007538">
    <property type="entry name" value="PRK10150.1"/>
    <property type="match status" value="1"/>
</dbReference>
<dbReference type="PANTHER" id="PTHR10066">
    <property type="entry name" value="BETA-GLUCURONIDASE"/>
    <property type="match status" value="1"/>
</dbReference>
<dbReference type="PANTHER" id="PTHR10066:SF67">
    <property type="entry name" value="BETA-GLUCURONIDASE"/>
    <property type="match status" value="1"/>
</dbReference>
<dbReference type="Pfam" id="PF00703">
    <property type="entry name" value="Glyco_hydro_2"/>
    <property type="match status" value="1"/>
</dbReference>
<dbReference type="Pfam" id="PF02836">
    <property type="entry name" value="Glyco_hydro_2_C"/>
    <property type="match status" value="1"/>
</dbReference>
<dbReference type="Pfam" id="PF02837">
    <property type="entry name" value="Glyco_hydro_2_N"/>
    <property type="match status" value="1"/>
</dbReference>
<dbReference type="PRINTS" id="PR00132">
    <property type="entry name" value="GLHYDRLASE2"/>
</dbReference>
<dbReference type="SUPFAM" id="SSF51445">
    <property type="entry name" value="(Trans)glycosidases"/>
    <property type="match status" value="1"/>
</dbReference>
<dbReference type="SUPFAM" id="SSF49303">
    <property type="entry name" value="beta-Galactosidase/glucuronidase domain"/>
    <property type="match status" value="1"/>
</dbReference>
<dbReference type="SUPFAM" id="SSF49785">
    <property type="entry name" value="Galactose-binding domain-like"/>
    <property type="match status" value="1"/>
</dbReference>
<dbReference type="PROSITE" id="PS00719">
    <property type="entry name" value="GLYCOSYL_HYDROL_F2_1"/>
    <property type="match status" value="1"/>
</dbReference>
<dbReference type="PROSITE" id="PS00608">
    <property type="entry name" value="GLYCOSYL_HYDROL_F2_2"/>
    <property type="match status" value="1"/>
</dbReference>
<accession>A0A089LCJ8</accession>
<sequence>MLFPKDTLTREIKDLSGIWRFKADPDNRGREEKWHHQPLQDTIPMPVPASYNDITQDAALRDHIGDVWYEQTFIVPRSWSGDRMMLWIGSACHHAVVWVNGVEVASHKGGFLPFEADITRVAVPGRENRVTIVVNNVLNWQTLPPGRIKTFDDEKHPEGYRVQEYFHDFFNYAGLHRPVKLYRTSGLFIQDITITTDVQGESGVVGYSIECSQPEGEVRVKLLDEDGKEAATGKGSSGTLQVENARLWKPLQAYLYTLHVELLDSYGQLADHYQLQVGIRTVKVEGTRFLINGERFYFKGFGKHEDSDIRGKGLDQAVNVKDFNLLKWINANSFRTSHYPYAEELLELADREGIVVIGEVPAVGFTFFNYNDKVYTPDQANEETLAHHHDVLSDLIARDKNHPSVVMWSLANEAATFQDEAVPYFRQLADTARRLDPQRPITIVQWPLPDKCKVAQFFDVICVNRYYSWYQDPGALELVEHQVEWELTNWYRNFGKPVIMTEYGADAIAGFHQDPPVMFTEEYQEELLTRYHNVFDRLDFVIGEHVWAFADFATKQGITRINGNKKGVFTRQRQPKAAARMLRSRWGEMGEYPEKL</sequence>
<keyword id="KW-0963">Cytoplasm</keyword>
<keyword id="KW-0326">Glycosidase</keyword>
<keyword id="KW-0378">Hydrolase</keyword>
<evidence type="ECO:0000250" key="1">
    <source>
        <dbReference type="UniProtKB" id="P05804"/>
    </source>
</evidence>
<evidence type="ECO:0000269" key="2">
    <source>
    </source>
</evidence>
<evidence type="ECO:0000303" key="3">
    <source>
    </source>
</evidence>
<evidence type="ECO:0000305" key="4"/>
<evidence type="ECO:0000305" key="5">
    <source>
    </source>
</evidence>
<evidence type="ECO:0000312" key="6">
    <source>
        <dbReference type="EMBL" id="AIQ57810.1"/>
    </source>
</evidence>
<name>BGLR_PAEBO</name>
<comment type="function">
    <text evidence="2">Displays beta-glucuronidase activity with the artificial substrate p-nitrophenyl-beta-D-glucuronide (PNPG) (PubMed:35947916). Is probably involved in the metabolism of oligosaccharides containing the 3-O-beta-D-glucopyranosyl-beta-D-glucuronide structure released from bacterial and plant acidic carbohydrates (PubMed:35947916).</text>
</comment>
<comment type="catalytic activity">
    <reaction evidence="2">
        <text>a beta-D-glucuronoside + H2O = D-glucuronate + an alcohol</text>
        <dbReference type="Rhea" id="RHEA:17633"/>
        <dbReference type="ChEBI" id="CHEBI:15377"/>
        <dbReference type="ChEBI" id="CHEBI:30879"/>
        <dbReference type="ChEBI" id="CHEBI:58720"/>
        <dbReference type="ChEBI" id="CHEBI:83411"/>
        <dbReference type="EC" id="3.2.1.31"/>
    </reaction>
</comment>
<comment type="biophysicochemical properties">
    <kinetics>
        <KM evidence="2">5.26 mM for p-nitrophenyl-beta-D-glucuronide</KM>
        <text evidence="2">kcat is 12.2 sec(-1) with p-nitrophenyl-beta-D-glucuronide as sustrate.</text>
    </kinetics>
    <phDependence>
        <text evidence="2">Optimum pH is 5.9 (PubMed:35947916). Shows high activity in a broad pH range of 5.9 to 7.7 (PubMed:35947916).</text>
    </phDependence>
</comment>
<comment type="subcellular location">
    <subcellularLocation>
        <location evidence="5">Cytoplasm</location>
    </subcellularLocation>
</comment>
<comment type="domain">
    <text evidence="1">The N-K motif seems to be a discriminant that could be employed as a fingerprint to identify beta-glucuronidases from the large GH2 family of proteins.</text>
</comment>
<comment type="similarity">
    <text evidence="4">Belongs to the glycosyl hydrolase 2 family.</text>
</comment>
<feature type="chain" id="PRO_0000461989" description="Beta-glucuronidase">
    <location>
        <begin position="1"/>
        <end position="596"/>
    </location>
</feature>
<feature type="short sequence motif" description="N-K motif" evidence="1">
    <location>
        <begin position="564"/>
        <end position="566"/>
    </location>
</feature>
<feature type="active site" description="Proton donor" evidence="1">
    <location>
        <position position="413"/>
    </location>
</feature>
<feature type="active site" description="Nucleophile" evidence="1">
    <location>
        <position position="502"/>
    </location>
</feature>
<feature type="binding site" evidence="1">
    <location>
        <position position="168"/>
    </location>
    <ligand>
        <name>D-glucuronate</name>
        <dbReference type="ChEBI" id="CHEBI:58720"/>
    </ligand>
</feature>
<feature type="binding site" evidence="1">
    <location>
        <position position="412"/>
    </location>
    <ligand>
        <name>D-glucuronate</name>
        <dbReference type="ChEBI" id="CHEBI:58720"/>
    </ligand>
</feature>
<feature type="binding site" evidence="1">
    <location>
        <position position="464"/>
    </location>
    <ligand>
        <name>D-glucuronate</name>
        <dbReference type="ChEBI" id="CHEBI:58720"/>
    </ligand>
</feature>
<feature type="binding site" evidence="1">
    <location>
        <position position="470"/>
    </location>
    <ligand>
        <name>D-glucuronate</name>
        <dbReference type="ChEBI" id="CHEBI:58720"/>
    </ligand>
</feature>
<feature type="binding site" evidence="1">
    <location>
        <position position="502"/>
    </location>
    <ligand>
        <name>D-glucuronate</name>
        <dbReference type="ChEBI" id="CHEBI:58720"/>
    </ligand>
</feature>
<feature type="binding site" evidence="1">
    <location>
        <position position="547"/>
    </location>
    <ligand>
        <name>D-glucuronate</name>
        <dbReference type="ChEBI" id="CHEBI:58720"/>
    </ligand>
</feature>
<feature type="binding site" evidence="1">
    <location>
        <position position="566"/>
    </location>
    <ligand>
        <name>D-glucuronate</name>
        <dbReference type="ChEBI" id="CHEBI:58720"/>
    </ligand>
</feature>
<reference evidence="6" key="1">
    <citation type="submission" date="2014-08" db="EMBL/GenBank/DDBJ databases">
        <title>Comparative genomics of the Paenibacillus odorifer group.</title>
        <authorList>
            <person name="den Bakker H.C."/>
            <person name="Tsai Y.-C.Y.-C."/>
            <person name="Martin N."/>
            <person name="Korlach J."/>
            <person name="Wiedmann M."/>
        </authorList>
    </citation>
    <scope>NUCLEOTIDE SEQUENCE [LARGE SCALE GENOMIC DNA]</scope>
    <source>
        <strain>DSM 13188 / CCUG 43137 / CIP 107056 / KCTC 3805 / KK19</strain>
    </source>
</reference>
<reference key="2">
    <citation type="journal article" date="2022" name="Biochem. Biophys. Res. Commun.">
        <title>Functional characterization of a novel GH94 glycoside phosphorylase, 3-O-beta-d-glucopyranosyl beta-d-glucuronide phosphorylase, and implication of the metabolic pathway of acidic carbohydrates in Paenibacillus borealis.</title>
        <authorList>
            <person name="Isono N."/>
            <person name="Mizutani E."/>
            <person name="Hayashida H."/>
            <person name="Katsuzaki H."/>
            <person name="Saburi W."/>
        </authorList>
    </citation>
    <scope>FUNCTION</scope>
    <scope>CATALYTIC ACTIVITY</scope>
    <scope>BIOPHYSICOCHEMICAL PROPERTIES</scope>
    <source>
        <strain>DSM 13188 / CCUG 43137 / CIP 107056 / KCTC 3805 / KK19</strain>
    </source>
</reference>
<proteinExistence type="evidence at protein level"/>
<organism>
    <name type="scientific">Paenibacillus borealis</name>
    <dbReference type="NCBI Taxonomy" id="160799"/>
    <lineage>
        <taxon>Bacteria</taxon>
        <taxon>Bacillati</taxon>
        <taxon>Bacillota</taxon>
        <taxon>Bacilli</taxon>
        <taxon>Bacillales</taxon>
        <taxon>Paenibacillaceae</taxon>
        <taxon>Paenibacillus</taxon>
    </lineage>
</organism>
<gene>
    <name evidence="6" type="ORF">PBOR_13360</name>
</gene>